<name>GLGB_BUTFI</name>
<comment type="function">
    <text evidence="1">Catalyzes the formation of the alpha-1,6-glucosidic linkages in glycogen by scission of a 1,4-alpha-linked oligosaccharide from growing alpha-1,4-glucan chains and the subsequent attachment of the oligosaccharide to the alpha-1,6 position.</text>
</comment>
<comment type="catalytic activity">
    <reaction>
        <text>Transfers a segment of a (1-&gt;4)-alpha-D-glucan chain to a primary hydroxy group in a similar glucan chain.</text>
        <dbReference type="EC" id="2.4.1.18"/>
    </reaction>
</comment>
<comment type="pathway">
    <text>Glycan biosynthesis; glycogen biosynthesis.</text>
</comment>
<comment type="subunit">
    <text evidence="1">Monomer.</text>
</comment>
<comment type="similarity">
    <text evidence="2">Belongs to the glycosyl hydrolase 13 family. GlgB subfamily.</text>
</comment>
<gene>
    <name type="primary">glgB</name>
</gene>
<evidence type="ECO:0000250" key="1"/>
<evidence type="ECO:0000305" key="2"/>
<reference key="1">
    <citation type="journal article" date="1991" name="J. Bacteriol.">
        <title>Characterization of the Butyrivibrio fibrisolvens glgB gene, which encodes a glycogen-branching enzyme with starch-clearing activity.</title>
        <authorList>
            <person name="Rumbak E."/>
            <person name="Rawlings D.E."/>
            <person name="Lindsey G.G."/>
            <person name="Woods D.R."/>
        </authorList>
    </citation>
    <scope>NUCLEOTIDE SEQUENCE [GENOMIC DNA]</scope>
    <scope>PROTEIN SEQUENCE OF 1-12</scope>
    <source>
        <strain>H17C</strain>
    </source>
</reference>
<feature type="chain" id="PRO_0000188690" description="1,4-alpha-glucan branching enzyme GlgB">
    <location>
        <begin position="1"/>
        <end position="639"/>
    </location>
</feature>
<feature type="active site" description="Nucleophile" evidence="1">
    <location>
        <position position="313"/>
    </location>
</feature>
<feature type="active site" description="Proton donor" evidence="1">
    <location>
        <position position="366"/>
    </location>
</feature>
<organism>
    <name type="scientific">Butyrivibrio fibrisolvens</name>
    <dbReference type="NCBI Taxonomy" id="831"/>
    <lineage>
        <taxon>Bacteria</taxon>
        <taxon>Bacillati</taxon>
        <taxon>Bacillota</taxon>
        <taxon>Clostridia</taxon>
        <taxon>Lachnospirales</taxon>
        <taxon>Lachnospiraceae</taxon>
        <taxon>Butyrivibrio</taxon>
    </lineage>
</organism>
<dbReference type="EC" id="2.4.1.18"/>
<dbReference type="EMBL" id="M64980">
    <property type="protein sequence ID" value="AAA23007.1"/>
    <property type="molecule type" value="Genomic_DNA"/>
</dbReference>
<dbReference type="PIR" id="B41328">
    <property type="entry name" value="B41328"/>
</dbReference>
<dbReference type="SMR" id="P30539"/>
<dbReference type="CAZy" id="CBM48">
    <property type="family name" value="Carbohydrate-Binding Module Family 48"/>
</dbReference>
<dbReference type="CAZy" id="GH13">
    <property type="family name" value="Glycoside Hydrolase Family 13"/>
</dbReference>
<dbReference type="UniPathway" id="UPA00164"/>
<dbReference type="GO" id="GO:0005829">
    <property type="term" value="C:cytosol"/>
    <property type="evidence" value="ECO:0007669"/>
    <property type="project" value="TreeGrafter"/>
</dbReference>
<dbReference type="GO" id="GO:0003844">
    <property type="term" value="F:1,4-alpha-glucan branching enzyme activity"/>
    <property type="evidence" value="ECO:0000314"/>
    <property type="project" value="CACAO"/>
</dbReference>
<dbReference type="GO" id="GO:0043169">
    <property type="term" value="F:cation binding"/>
    <property type="evidence" value="ECO:0007669"/>
    <property type="project" value="InterPro"/>
</dbReference>
<dbReference type="GO" id="GO:0004553">
    <property type="term" value="F:hydrolase activity, hydrolyzing O-glycosyl compounds"/>
    <property type="evidence" value="ECO:0007669"/>
    <property type="project" value="InterPro"/>
</dbReference>
<dbReference type="GO" id="GO:0005978">
    <property type="term" value="P:glycogen biosynthetic process"/>
    <property type="evidence" value="ECO:0007669"/>
    <property type="project" value="UniProtKB-UniRule"/>
</dbReference>
<dbReference type="CDD" id="cd11322">
    <property type="entry name" value="AmyAc_Glg_BE"/>
    <property type="match status" value="1"/>
</dbReference>
<dbReference type="CDD" id="cd02855">
    <property type="entry name" value="E_set_GBE_prok_N"/>
    <property type="match status" value="1"/>
</dbReference>
<dbReference type="FunFam" id="2.60.40.10:FF:000169">
    <property type="entry name" value="1,4-alpha-glucan branching enzyme GlgB"/>
    <property type="match status" value="1"/>
</dbReference>
<dbReference type="FunFam" id="2.60.40.1180:FF:000002">
    <property type="entry name" value="1,4-alpha-glucan branching enzyme GlgB"/>
    <property type="match status" value="1"/>
</dbReference>
<dbReference type="FunFam" id="3.20.20.80:FF:000003">
    <property type="entry name" value="1,4-alpha-glucan branching enzyme GlgB"/>
    <property type="match status" value="1"/>
</dbReference>
<dbReference type="Gene3D" id="3.20.20.80">
    <property type="entry name" value="Glycosidases"/>
    <property type="match status" value="1"/>
</dbReference>
<dbReference type="Gene3D" id="2.60.40.1180">
    <property type="entry name" value="Golgi alpha-mannosidase II"/>
    <property type="match status" value="1"/>
</dbReference>
<dbReference type="Gene3D" id="2.60.40.10">
    <property type="entry name" value="Immunoglobulins"/>
    <property type="match status" value="1"/>
</dbReference>
<dbReference type="HAMAP" id="MF_00685">
    <property type="entry name" value="GlgB"/>
    <property type="match status" value="1"/>
</dbReference>
<dbReference type="InterPro" id="IPR006048">
    <property type="entry name" value="A-amylase/branching_C"/>
</dbReference>
<dbReference type="InterPro" id="IPR037439">
    <property type="entry name" value="Branching_enzy"/>
</dbReference>
<dbReference type="InterPro" id="IPR006407">
    <property type="entry name" value="GlgB"/>
</dbReference>
<dbReference type="InterPro" id="IPR044143">
    <property type="entry name" value="GlgB_N_E_set_prok"/>
</dbReference>
<dbReference type="InterPro" id="IPR006047">
    <property type="entry name" value="Glyco_hydro_13_cat_dom"/>
</dbReference>
<dbReference type="InterPro" id="IPR004193">
    <property type="entry name" value="Glyco_hydro_13_N"/>
</dbReference>
<dbReference type="InterPro" id="IPR013780">
    <property type="entry name" value="Glyco_hydro_b"/>
</dbReference>
<dbReference type="InterPro" id="IPR017853">
    <property type="entry name" value="Glycoside_hydrolase_SF"/>
</dbReference>
<dbReference type="InterPro" id="IPR013783">
    <property type="entry name" value="Ig-like_fold"/>
</dbReference>
<dbReference type="NCBIfam" id="TIGR01515">
    <property type="entry name" value="branching_enzym"/>
    <property type="match status" value="1"/>
</dbReference>
<dbReference type="NCBIfam" id="NF003811">
    <property type="entry name" value="PRK05402.1"/>
    <property type="match status" value="1"/>
</dbReference>
<dbReference type="NCBIfam" id="NF008967">
    <property type="entry name" value="PRK12313.1"/>
    <property type="match status" value="1"/>
</dbReference>
<dbReference type="PANTHER" id="PTHR43651">
    <property type="entry name" value="1,4-ALPHA-GLUCAN-BRANCHING ENZYME"/>
    <property type="match status" value="1"/>
</dbReference>
<dbReference type="PANTHER" id="PTHR43651:SF3">
    <property type="entry name" value="1,4-ALPHA-GLUCAN-BRANCHING ENZYME"/>
    <property type="match status" value="1"/>
</dbReference>
<dbReference type="Pfam" id="PF00128">
    <property type="entry name" value="Alpha-amylase"/>
    <property type="match status" value="2"/>
</dbReference>
<dbReference type="Pfam" id="PF02806">
    <property type="entry name" value="Alpha-amylase_C"/>
    <property type="match status" value="1"/>
</dbReference>
<dbReference type="Pfam" id="PF02922">
    <property type="entry name" value="CBM_48"/>
    <property type="match status" value="1"/>
</dbReference>
<dbReference type="PIRSF" id="PIRSF000463">
    <property type="entry name" value="GlgB"/>
    <property type="match status" value="1"/>
</dbReference>
<dbReference type="SMART" id="SM00642">
    <property type="entry name" value="Aamy"/>
    <property type="match status" value="1"/>
</dbReference>
<dbReference type="SUPFAM" id="SSF51445">
    <property type="entry name" value="(Trans)glycosidases"/>
    <property type="match status" value="1"/>
</dbReference>
<dbReference type="SUPFAM" id="SSF51011">
    <property type="entry name" value="Glycosyl hydrolase domain"/>
    <property type="match status" value="1"/>
</dbReference>
<proteinExistence type="evidence at protein level"/>
<keyword id="KW-0119">Carbohydrate metabolism</keyword>
<keyword id="KW-0903">Direct protein sequencing</keyword>
<keyword id="KW-0320">Glycogen biosynthesis</keyword>
<keyword id="KW-0321">Glycogen metabolism</keyword>
<keyword id="KW-0328">Glycosyltransferase</keyword>
<keyword id="KW-0808">Transferase</keyword>
<protein>
    <recommendedName>
        <fullName>1,4-alpha-glucan branching enzyme GlgB</fullName>
        <ecNumber>2.4.1.18</ecNumber>
    </recommendedName>
    <alternativeName>
        <fullName>1,4-alpha-D-glucan:1,4-alpha-D-glucan 6-glucosyl-transferase</fullName>
    </alternativeName>
    <alternativeName>
        <fullName>Alpha-(1-&gt;4)-glucan branching enzyme</fullName>
    </alternativeName>
    <alternativeName>
        <fullName>Glycogen branching enzyme</fullName>
        <shortName>BE</shortName>
    </alternativeName>
</protein>
<accession>P30539</accession>
<sequence length="639" mass="73876">MSQKVFISEDDEYLFGQGTHYDIYDKLGAHPSEEKGKKGFFFAVWAPNAADVHVVGDFNGWDENAHQMKRSKTGNIWTLFIPGVAIGALYKFLITAQDGRKLYKADPYANYAELRPGNASRTTDLSGFKWSDSKWYESLKGKDMNRQPIAIYECHIGSWMKHPDGTEDGFYTYRQFADRIVEYLKEMKYTHIELIGIAEHPFDGSWGYQVTGYYAPTARYGEPTDFMYLINQLHKHGIGVILDWVPAHFCPDEFGLACFDGTCIYEDPDPRKGEHPDWGTKIFNLAKPEVKNFLIANALYWIRKFHIDGLRVDAVASMLYLDYGKKDGQWVPNKYGDNKNLDAIEFFKHFNSVVRGTYPNILTIAEESTAWPKVTAPPEEDGLGFAFKWNMGWMHDFCEYMKLDPYFRQGAHYMMTFAMSYNDSENYILPLSHDEVVHLKCSMVEKMPGYKVDKYANLRVGYTYMFGHSGKKLLFMGQDFGQEREWSEKRELDWFLLENDLNRGMKDYVGKLLEIYRKYPALYEVDNDWGGFEWINADDKERSTYSFYRRASNGKDNILFVLNMTPMERKGFKVGVPFDGTYTKILDSAKECYGGSGSSVPDKIKAVKGLCDYKDYSIEFDLPPYGAEVFVFQTKKTKN</sequence>